<sequence length="155" mass="16574">MQIKQIEGALSAKDARFALVISRFNDFIGQKLMEGAIDCIRRHGGSEDNITIYRCPGAFELPMVAKKAALTGKYDALITLGAIIRGSTPHFDVVAAEATKGIAQASLETGVPIAFGVLTTENIEQAIERAGTKAGNKGFDAALTAIEMVNLYRNM</sequence>
<accession>Q3B1F0</accession>
<protein>
    <recommendedName>
        <fullName evidence="1">6,7-dimethyl-8-ribityllumazine synthase</fullName>
        <shortName evidence="1">DMRL synthase</shortName>
        <shortName evidence="1">LS</shortName>
        <shortName evidence="1">Lumazine synthase</shortName>
        <ecNumber evidence="1">2.5.1.78</ecNumber>
    </recommendedName>
</protein>
<name>RISB_CHLL3</name>
<proteinExistence type="inferred from homology"/>
<keyword id="KW-1185">Reference proteome</keyword>
<keyword id="KW-0686">Riboflavin biosynthesis</keyword>
<keyword id="KW-0808">Transferase</keyword>
<reference key="1">
    <citation type="submission" date="2005-08" db="EMBL/GenBank/DDBJ databases">
        <title>Complete sequence of Pelodictyon luteolum DSM 273.</title>
        <authorList>
            <consortium name="US DOE Joint Genome Institute"/>
            <person name="Copeland A."/>
            <person name="Lucas S."/>
            <person name="Lapidus A."/>
            <person name="Barry K."/>
            <person name="Detter J.C."/>
            <person name="Glavina T."/>
            <person name="Hammon N."/>
            <person name="Israni S."/>
            <person name="Pitluck S."/>
            <person name="Bryant D."/>
            <person name="Schmutz J."/>
            <person name="Larimer F."/>
            <person name="Land M."/>
            <person name="Kyrpides N."/>
            <person name="Ivanova N."/>
            <person name="Richardson P."/>
        </authorList>
    </citation>
    <scope>NUCLEOTIDE SEQUENCE [LARGE SCALE GENOMIC DNA]</scope>
    <source>
        <strain>DSM 273 / BCRC 81028 / 2530</strain>
    </source>
</reference>
<organism>
    <name type="scientific">Chlorobium luteolum (strain DSM 273 / BCRC 81028 / 2530)</name>
    <name type="common">Pelodictyon luteolum</name>
    <dbReference type="NCBI Taxonomy" id="319225"/>
    <lineage>
        <taxon>Bacteria</taxon>
        <taxon>Pseudomonadati</taxon>
        <taxon>Chlorobiota</taxon>
        <taxon>Chlorobiia</taxon>
        <taxon>Chlorobiales</taxon>
        <taxon>Chlorobiaceae</taxon>
        <taxon>Chlorobium/Pelodictyon group</taxon>
        <taxon>Pelodictyon</taxon>
    </lineage>
</organism>
<evidence type="ECO:0000255" key="1">
    <source>
        <dbReference type="HAMAP-Rule" id="MF_00178"/>
    </source>
</evidence>
<gene>
    <name evidence="1" type="primary">ribH</name>
    <name type="ordered locus">Plut_1989</name>
</gene>
<feature type="chain" id="PRO_1000040473" description="6,7-dimethyl-8-ribityllumazine synthase">
    <location>
        <begin position="1"/>
        <end position="155"/>
    </location>
</feature>
<feature type="active site" description="Proton donor" evidence="1">
    <location>
        <position position="90"/>
    </location>
</feature>
<feature type="binding site" evidence="1">
    <location>
        <position position="24"/>
    </location>
    <ligand>
        <name>5-amino-6-(D-ribitylamino)uracil</name>
        <dbReference type="ChEBI" id="CHEBI:15934"/>
    </ligand>
</feature>
<feature type="binding site" evidence="1">
    <location>
        <begin position="58"/>
        <end position="60"/>
    </location>
    <ligand>
        <name>5-amino-6-(D-ribitylamino)uracil</name>
        <dbReference type="ChEBI" id="CHEBI:15934"/>
    </ligand>
</feature>
<feature type="binding site" evidence="1">
    <location>
        <begin position="82"/>
        <end position="84"/>
    </location>
    <ligand>
        <name>5-amino-6-(D-ribitylamino)uracil</name>
        <dbReference type="ChEBI" id="CHEBI:15934"/>
    </ligand>
</feature>
<feature type="binding site" evidence="1">
    <location>
        <begin position="87"/>
        <end position="88"/>
    </location>
    <ligand>
        <name>(2S)-2-hydroxy-3-oxobutyl phosphate</name>
        <dbReference type="ChEBI" id="CHEBI:58830"/>
    </ligand>
</feature>
<feature type="binding site" evidence="1">
    <location>
        <position position="115"/>
    </location>
    <ligand>
        <name>5-amino-6-(D-ribitylamino)uracil</name>
        <dbReference type="ChEBI" id="CHEBI:15934"/>
    </ligand>
</feature>
<feature type="binding site" evidence="1">
    <location>
        <position position="129"/>
    </location>
    <ligand>
        <name>(2S)-2-hydroxy-3-oxobutyl phosphate</name>
        <dbReference type="ChEBI" id="CHEBI:58830"/>
    </ligand>
</feature>
<dbReference type="EC" id="2.5.1.78" evidence="1"/>
<dbReference type="EMBL" id="CP000096">
    <property type="protein sequence ID" value="ABB24831.1"/>
    <property type="molecule type" value="Genomic_DNA"/>
</dbReference>
<dbReference type="RefSeq" id="WP_011358701.1">
    <property type="nucleotide sequence ID" value="NC_007512.1"/>
</dbReference>
<dbReference type="SMR" id="Q3B1F0"/>
<dbReference type="STRING" id="319225.Plut_1989"/>
<dbReference type="KEGG" id="plt:Plut_1989"/>
<dbReference type="eggNOG" id="COG0054">
    <property type="taxonomic scope" value="Bacteria"/>
</dbReference>
<dbReference type="HOGENOM" id="CLU_089358_1_1_10"/>
<dbReference type="OrthoDB" id="9809709at2"/>
<dbReference type="UniPathway" id="UPA00275">
    <property type="reaction ID" value="UER00404"/>
</dbReference>
<dbReference type="Proteomes" id="UP000002709">
    <property type="component" value="Chromosome"/>
</dbReference>
<dbReference type="GO" id="GO:0005829">
    <property type="term" value="C:cytosol"/>
    <property type="evidence" value="ECO:0007669"/>
    <property type="project" value="TreeGrafter"/>
</dbReference>
<dbReference type="GO" id="GO:0009349">
    <property type="term" value="C:riboflavin synthase complex"/>
    <property type="evidence" value="ECO:0007669"/>
    <property type="project" value="InterPro"/>
</dbReference>
<dbReference type="GO" id="GO:0000906">
    <property type="term" value="F:6,7-dimethyl-8-ribityllumazine synthase activity"/>
    <property type="evidence" value="ECO:0007669"/>
    <property type="project" value="UniProtKB-UniRule"/>
</dbReference>
<dbReference type="GO" id="GO:0009231">
    <property type="term" value="P:riboflavin biosynthetic process"/>
    <property type="evidence" value="ECO:0007669"/>
    <property type="project" value="UniProtKB-UniRule"/>
</dbReference>
<dbReference type="CDD" id="cd09209">
    <property type="entry name" value="Lumazine_synthase-I"/>
    <property type="match status" value="1"/>
</dbReference>
<dbReference type="FunFam" id="3.40.50.960:FF:000001">
    <property type="entry name" value="6,7-dimethyl-8-ribityllumazine synthase"/>
    <property type="match status" value="1"/>
</dbReference>
<dbReference type="Gene3D" id="3.40.50.960">
    <property type="entry name" value="Lumazine/riboflavin synthase"/>
    <property type="match status" value="1"/>
</dbReference>
<dbReference type="HAMAP" id="MF_00178">
    <property type="entry name" value="Lumazine_synth"/>
    <property type="match status" value="1"/>
</dbReference>
<dbReference type="InterPro" id="IPR034964">
    <property type="entry name" value="LS"/>
</dbReference>
<dbReference type="InterPro" id="IPR002180">
    <property type="entry name" value="LS/RS"/>
</dbReference>
<dbReference type="InterPro" id="IPR036467">
    <property type="entry name" value="LS/RS_sf"/>
</dbReference>
<dbReference type="NCBIfam" id="TIGR00114">
    <property type="entry name" value="lumazine-synth"/>
    <property type="match status" value="1"/>
</dbReference>
<dbReference type="NCBIfam" id="NF000812">
    <property type="entry name" value="PRK00061.1-4"/>
    <property type="match status" value="1"/>
</dbReference>
<dbReference type="PANTHER" id="PTHR21058:SF0">
    <property type="entry name" value="6,7-DIMETHYL-8-RIBITYLLUMAZINE SYNTHASE"/>
    <property type="match status" value="1"/>
</dbReference>
<dbReference type="PANTHER" id="PTHR21058">
    <property type="entry name" value="6,7-DIMETHYL-8-RIBITYLLUMAZINE SYNTHASE DMRL SYNTHASE LUMAZINE SYNTHASE"/>
    <property type="match status" value="1"/>
</dbReference>
<dbReference type="Pfam" id="PF00885">
    <property type="entry name" value="DMRL_synthase"/>
    <property type="match status" value="1"/>
</dbReference>
<dbReference type="SUPFAM" id="SSF52121">
    <property type="entry name" value="Lumazine synthase"/>
    <property type="match status" value="1"/>
</dbReference>
<comment type="function">
    <text evidence="1">Catalyzes the formation of 6,7-dimethyl-8-ribityllumazine by condensation of 5-amino-6-(D-ribitylamino)uracil with 3,4-dihydroxy-2-butanone 4-phosphate. This is the penultimate step in the biosynthesis of riboflavin.</text>
</comment>
<comment type="catalytic activity">
    <reaction evidence="1">
        <text>(2S)-2-hydroxy-3-oxobutyl phosphate + 5-amino-6-(D-ribitylamino)uracil = 6,7-dimethyl-8-(1-D-ribityl)lumazine + phosphate + 2 H2O + H(+)</text>
        <dbReference type="Rhea" id="RHEA:26152"/>
        <dbReference type="ChEBI" id="CHEBI:15377"/>
        <dbReference type="ChEBI" id="CHEBI:15378"/>
        <dbReference type="ChEBI" id="CHEBI:15934"/>
        <dbReference type="ChEBI" id="CHEBI:43474"/>
        <dbReference type="ChEBI" id="CHEBI:58201"/>
        <dbReference type="ChEBI" id="CHEBI:58830"/>
        <dbReference type="EC" id="2.5.1.78"/>
    </reaction>
</comment>
<comment type="pathway">
    <text evidence="1">Cofactor biosynthesis; riboflavin biosynthesis; riboflavin from 2-hydroxy-3-oxobutyl phosphate and 5-amino-6-(D-ribitylamino)uracil: step 1/2.</text>
</comment>
<comment type="similarity">
    <text evidence="1">Belongs to the DMRL synthase family.</text>
</comment>